<gene>
    <name evidence="1" type="primary">bioB</name>
    <name type="ordered locus">Rpic_0117</name>
</gene>
<organism>
    <name type="scientific">Ralstonia pickettii (strain 12J)</name>
    <dbReference type="NCBI Taxonomy" id="402626"/>
    <lineage>
        <taxon>Bacteria</taxon>
        <taxon>Pseudomonadati</taxon>
        <taxon>Pseudomonadota</taxon>
        <taxon>Betaproteobacteria</taxon>
        <taxon>Burkholderiales</taxon>
        <taxon>Burkholderiaceae</taxon>
        <taxon>Ralstonia</taxon>
    </lineage>
</organism>
<feature type="chain" id="PRO_0000381575" description="Biotin synthase">
    <location>
        <begin position="1"/>
        <end position="359"/>
    </location>
</feature>
<feature type="domain" description="Radical SAM core" evidence="2">
    <location>
        <begin position="58"/>
        <end position="285"/>
    </location>
</feature>
<feature type="region of interest" description="Disordered" evidence="3">
    <location>
        <begin position="1"/>
        <end position="22"/>
    </location>
</feature>
<feature type="binding site" evidence="1">
    <location>
        <position position="73"/>
    </location>
    <ligand>
        <name>[4Fe-4S] cluster</name>
        <dbReference type="ChEBI" id="CHEBI:49883"/>
        <note>4Fe-4S-S-AdoMet</note>
    </ligand>
</feature>
<feature type="binding site" evidence="1">
    <location>
        <position position="77"/>
    </location>
    <ligand>
        <name>[4Fe-4S] cluster</name>
        <dbReference type="ChEBI" id="CHEBI:49883"/>
        <note>4Fe-4S-S-AdoMet</note>
    </ligand>
</feature>
<feature type="binding site" evidence="1">
    <location>
        <position position="80"/>
    </location>
    <ligand>
        <name>[4Fe-4S] cluster</name>
        <dbReference type="ChEBI" id="CHEBI:49883"/>
        <note>4Fe-4S-S-AdoMet</note>
    </ligand>
</feature>
<feature type="binding site" evidence="1">
    <location>
        <position position="117"/>
    </location>
    <ligand>
        <name>[2Fe-2S] cluster</name>
        <dbReference type="ChEBI" id="CHEBI:190135"/>
    </ligand>
</feature>
<feature type="binding site" evidence="1">
    <location>
        <position position="148"/>
    </location>
    <ligand>
        <name>[2Fe-2S] cluster</name>
        <dbReference type="ChEBI" id="CHEBI:190135"/>
    </ligand>
</feature>
<feature type="binding site" evidence="1">
    <location>
        <position position="208"/>
    </location>
    <ligand>
        <name>[2Fe-2S] cluster</name>
        <dbReference type="ChEBI" id="CHEBI:190135"/>
    </ligand>
</feature>
<feature type="binding site" evidence="1">
    <location>
        <position position="280"/>
    </location>
    <ligand>
        <name>[2Fe-2S] cluster</name>
        <dbReference type="ChEBI" id="CHEBI:190135"/>
    </ligand>
</feature>
<name>BIOB_RALPJ</name>
<accession>B2UDA1</accession>
<sequence length="359" mass="39076">MQSTPLNFVPNAAKAPVTPGQAPDARWSREAIEALFALPFNDLLFQAQQVHRANFDANAVQLSTLLSIKTGGCPEDCSYCPQSARYDTGVEAEKLMPIDAVLEAASRAKQNGASRFCMGAAWRNPKPHQLDAVADMVRGVKAMGLETCVTLGMLKQEQAAQLKEAGLDYYNHNLDTAPEFYGEIITTRTYQDRLDTLEHVRDAGINVCCGGIVGLGESVHERAGLIAELANMEPYPDSVPINNLVKVEGTPLAGNEELDPFDFVRTIAVARITMPKAMVRLSAGREAMDDALQALCFMAGANSIFYGEKLLTTDNPEADADRKLLARLGMRVEVQDHMHHESHVGAQSSHCHIDITPAD</sequence>
<proteinExistence type="inferred from homology"/>
<evidence type="ECO:0000255" key="1">
    <source>
        <dbReference type="HAMAP-Rule" id="MF_01694"/>
    </source>
</evidence>
<evidence type="ECO:0000255" key="2">
    <source>
        <dbReference type="PROSITE-ProRule" id="PRU01266"/>
    </source>
</evidence>
<evidence type="ECO:0000256" key="3">
    <source>
        <dbReference type="SAM" id="MobiDB-lite"/>
    </source>
</evidence>
<keyword id="KW-0001">2Fe-2S</keyword>
<keyword id="KW-0004">4Fe-4S</keyword>
<keyword id="KW-0093">Biotin biosynthesis</keyword>
<keyword id="KW-0408">Iron</keyword>
<keyword id="KW-0411">Iron-sulfur</keyword>
<keyword id="KW-0479">Metal-binding</keyword>
<keyword id="KW-0949">S-adenosyl-L-methionine</keyword>
<keyword id="KW-0808">Transferase</keyword>
<dbReference type="EC" id="2.8.1.6" evidence="1"/>
<dbReference type="EMBL" id="CP001068">
    <property type="protein sequence ID" value="ACD25280.1"/>
    <property type="molecule type" value="Genomic_DNA"/>
</dbReference>
<dbReference type="SMR" id="B2UDA1"/>
<dbReference type="STRING" id="402626.Rpic_0117"/>
<dbReference type="KEGG" id="rpi:Rpic_0117"/>
<dbReference type="eggNOG" id="COG0502">
    <property type="taxonomic scope" value="Bacteria"/>
</dbReference>
<dbReference type="HOGENOM" id="CLU_033172_1_2_4"/>
<dbReference type="UniPathway" id="UPA00078">
    <property type="reaction ID" value="UER00162"/>
</dbReference>
<dbReference type="GO" id="GO:0051537">
    <property type="term" value="F:2 iron, 2 sulfur cluster binding"/>
    <property type="evidence" value="ECO:0007669"/>
    <property type="project" value="UniProtKB-KW"/>
</dbReference>
<dbReference type="GO" id="GO:0051539">
    <property type="term" value="F:4 iron, 4 sulfur cluster binding"/>
    <property type="evidence" value="ECO:0007669"/>
    <property type="project" value="UniProtKB-KW"/>
</dbReference>
<dbReference type="GO" id="GO:0004076">
    <property type="term" value="F:biotin synthase activity"/>
    <property type="evidence" value="ECO:0007669"/>
    <property type="project" value="UniProtKB-UniRule"/>
</dbReference>
<dbReference type="GO" id="GO:0005506">
    <property type="term" value="F:iron ion binding"/>
    <property type="evidence" value="ECO:0007669"/>
    <property type="project" value="UniProtKB-UniRule"/>
</dbReference>
<dbReference type="GO" id="GO:0009102">
    <property type="term" value="P:biotin biosynthetic process"/>
    <property type="evidence" value="ECO:0007669"/>
    <property type="project" value="UniProtKB-UniRule"/>
</dbReference>
<dbReference type="CDD" id="cd01335">
    <property type="entry name" value="Radical_SAM"/>
    <property type="match status" value="1"/>
</dbReference>
<dbReference type="FunFam" id="3.20.20.70:FF:000011">
    <property type="entry name" value="Biotin synthase"/>
    <property type="match status" value="1"/>
</dbReference>
<dbReference type="Gene3D" id="3.20.20.70">
    <property type="entry name" value="Aldolase class I"/>
    <property type="match status" value="1"/>
</dbReference>
<dbReference type="HAMAP" id="MF_01694">
    <property type="entry name" value="BioB"/>
    <property type="match status" value="1"/>
</dbReference>
<dbReference type="InterPro" id="IPR013785">
    <property type="entry name" value="Aldolase_TIM"/>
</dbReference>
<dbReference type="InterPro" id="IPR010722">
    <property type="entry name" value="BATS_dom"/>
</dbReference>
<dbReference type="InterPro" id="IPR002684">
    <property type="entry name" value="Biotin_synth/BioAB"/>
</dbReference>
<dbReference type="InterPro" id="IPR024177">
    <property type="entry name" value="Biotin_synthase"/>
</dbReference>
<dbReference type="InterPro" id="IPR006638">
    <property type="entry name" value="Elp3/MiaA/NifB-like_rSAM"/>
</dbReference>
<dbReference type="InterPro" id="IPR007197">
    <property type="entry name" value="rSAM"/>
</dbReference>
<dbReference type="NCBIfam" id="TIGR00433">
    <property type="entry name" value="bioB"/>
    <property type="match status" value="1"/>
</dbReference>
<dbReference type="PANTHER" id="PTHR22976">
    <property type="entry name" value="BIOTIN SYNTHASE"/>
    <property type="match status" value="1"/>
</dbReference>
<dbReference type="PANTHER" id="PTHR22976:SF2">
    <property type="entry name" value="BIOTIN SYNTHASE, MITOCHONDRIAL"/>
    <property type="match status" value="1"/>
</dbReference>
<dbReference type="Pfam" id="PF06968">
    <property type="entry name" value="BATS"/>
    <property type="match status" value="1"/>
</dbReference>
<dbReference type="Pfam" id="PF04055">
    <property type="entry name" value="Radical_SAM"/>
    <property type="match status" value="1"/>
</dbReference>
<dbReference type="PIRSF" id="PIRSF001619">
    <property type="entry name" value="Biotin_synth"/>
    <property type="match status" value="1"/>
</dbReference>
<dbReference type="SFLD" id="SFLDF00272">
    <property type="entry name" value="biotin_synthase"/>
    <property type="match status" value="1"/>
</dbReference>
<dbReference type="SFLD" id="SFLDS00029">
    <property type="entry name" value="Radical_SAM"/>
    <property type="match status" value="1"/>
</dbReference>
<dbReference type="SMART" id="SM00876">
    <property type="entry name" value="BATS"/>
    <property type="match status" value="1"/>
</dbReference>
<dbReference type="SMART" id="SM00729">
    <property type="entry name" value="Elp3"/>
    <property type="match status" value="1"/>
</dbReference>
<dbReference type="SUPFAM" id="SSF102114">
    <property type="entry name" value="Radical SAM enzymes"/>
    <property type="match status" value="1"/>
</dbReference>
<dbReference type="PROSITE" id="PS51918">
    <property type="entry name" value="RADICAL_SAM"/>
    <property type="match status" value="1"/>
</dbReference>
<comment type="function">
    <text evidence="1">Catalyzes the conversion of dethiobiotin (DTB) to biotin by the insertion of a sulfur atom into dethiobiotin via a radical-based mechanism.</text>
</comment>
<comment type="catalytic activity">
    <reaction evidence="1">
        <text>(4R,5S)-dethiobiotin + (sulfur carrier)-SH + 2 reduced [2Fe-2S]-[ferredoxin] + 2 S-adenosyl-L-methionine = (sulfur carrier)-H + biotin + 2 5'-deoxyadenosine + 2 L-methionine + 2 oxidized [2Fe-2S]-[ferredoxin]</text>
        <dbReference type="Rhea" id="RHEA:22060"/>
        <dbReference type="Rhea" id="RHEA-COMP:10000"/>
        <dbReference type="Rhea" id="RHEA-COMP:10001"/>
        <dbReference type="Rhea" id="RHEA-COMP:14737"/>
        <dbReference type="Rhea" id="RHEA-COMP:14739"/>
        <dbReference type="ChEBI" id="CHEBI:17319"/>
        <dbReference type="ChEBI" id="CHEBI:29917"/>
        <dbReference type="ChEBI" id="CHEBI:33737"/>
        <dbReference type="ChEBI" id="CHEBI:33738"/>
        <dbReference type="ChEBI" id="CHEBI:57586"/>
        <dbReference type="ChEBI" id="CHEBI:57844"/>
        <dbReference type="ChEBI" id="CHEBI:59789"/>
        <dbReference type="ChEBI" id="CHEBI:64428"/>
        <dbReference type="ChEBI" id="CHEBI:149473"/>
        <dbReference type="EC" id="2.8.1.6"/>
    </reaction>
</comment>
<comment type="cofactor">
    <cofactor evidence="1">
        <name>[4Fe-4S] cluster</name>
        <dbReference type="ChEBI" id="CHEBI:49883"/>
    </cofactor>
    <text evidence="1">Binds 1 [4Fe-4S] cluster. The cluster is coordinated with 3 cysteines and an exchangeable S-adenosyl-L-methionine.</text>
</comment>
<comment type="cofactor">
    <cofactor evidence="1">
        <name>[2Fe-2S] cluster</name>
        <dbReference type="ChEBI" id="CHEBI:190135"/>
    </cofactor>
    <text evidence="1">Binds 1 [2Fe-2S] cluster. The cluster is coordinated with 3 cysteines and 1 arginine.</text>
</comment>
<comment type="pathway">
    <text evidence="1">Cofactor biosynthesis; biotin biosynthesis; biotin from 7,8-diaminononanoate: step 2/2.</text>
</comment>
<comment type="subunit">
    <text evidence="1">Homodimer.</text>
</comment>
<comment type="similarity">
    <text evidence="1">Belongs to the radical SAM superfamily. Biotin synthase family.</text>
</comment>
<reference key="1">
    <citation type="submission" date="2008-05" db="EMBL/GenBank/DDBJ databases">
        <title>Complete sequence of chromosome 1 of Ralstonia pickettii 12J.</title>
        <authorList>
            <person name="Lucas S."/>
            <person name="Copeland A."/>
            <person name="Lapidus A."/>
            <person name="Glavina del Rio T."/>
            <person name="Dalin E."/>
            <person name="Tice H."/>
            <person name="Bruce D."/>
            <person name="Goodwin L."/>
            <person name="Pitluck S."/>
            <person name="Meincke L."/>
            <person name="Brettin T."/>
            <person name="Detter J.C."/>
            <person name="Han C."/>
            <person name="Kuske C.R."/>
            <person name="Schmutz J."/>
            <person name="Larimer F."/>
            <person name="Land M."/>
            <person name="Hauser L."/>
            <person name="Kyrpides N."/>
            <person name="Mikhailova N."/>
            <person name="Marsh T."/>
            <person name="Richardson P."/>
        </authorList>
    </citation>
    <scope>NUCLEOTIDE SEQUENCE [LARGE SCALE GENOMIC DNA]</scope>
    <source>
        <strain>12J</strain>
    </source>
</reference>
<protein>
    <recommendedName>
        <fullName evidence="1">Biotin synthase</fullName>
        <ecNumber evidence="1">2.8.1.6</ecNumber>
    </recommendedName>
</protein>